<organism>
    <name type="scientific">Lactococcus lactis subsp. cremoris</name>
    <name type="common">Streptococcus cremoris</name>
    <dbReference type="NCBI Taxonomy" id="1359"/>
    <lineage>
        <taxon>Bacteria</taxon>
        <taxon>Bacillati</taxon>
        <taxon>Bacillota</taxon>
        <taxon>Bacilli</taxon>
        <taxon>Lactobacillales</taxon>
        <taxon>Streptococcaceae</taxon>
        <taxon>Lactococcus</taxon>
    </lineage>
</organism>
<keyword id="KW-0614">Plasmid</keyword>
<reference key="1">
    <citation type="journal article" date="1996" name="Appl. Environ. Microbiol.">
        <title>AbiG, a genotypically novel abortive infection mechanism encoded by plasmid pCI750 of Lactococcus lactis subsp. cremoris UC653.</title>
        <authorList>
            <person name="O'Connor L."/>
            <person name="Coffey A."/>
            <person name="Daly C."/>
            <person name="Fitzgerald G.F."/>
        </authorList>
    </citation>
    <scope>NUCLEOTIDE SEQUENCE [GENOMIC DNA]</scope>
    <source>
        <strain>UC653</strain>
    </source>
</reference>
<reference key="2">
    <citation type="journal article" date="1999" name="Appl. Environ. Microbiol.">
        <title>Expression, regulation, and mode of action of the AbiG abortive infection system of Lactococcus lactis subsp. cremoris UC653.</title>
        <authorList>
            <person name="O'Connor L."/>
            <person name="Tangney M."/>
            <person name="Fitzgerald G.F."/>
        </authorList>
    </citation>
    <scope>EFFECT ON PHAGES</scope>
</reference>
<accession>Q48726</accession>
<sequence>MAKSKFKTTFSNDKATTSSTALLKYINKKAPKGYKYEILYKGSDIYSLKKDNTDEKISFLVRFKFPLNFEGIKVTNPQDLLELSYRTQKEIVLDETLQNGSDGQPPTLVSLKGEVGKQSIFPIPFPKLDPIKLEWFGGALEIPIKRIPYASLSEIKLESESDNILHVSFLFNETNNKVHLNTNINFEYLRTIDDYFKFRDFLKNYSEGRVKILSKNITLRSEDNNDKIKIFEKNDKLYNALRLIQSKIDTKIPFPQNLSIKDVNIIKILFESYINDRVVKFKSEPSLKFTFDDSSNFKESFPITGKKNMGIFVPFQRNIKFLSVSIPIIENQLYTDTTVKTADLQDRVLILETNKNNESFVFYQNSEEYKEISINEMLEKKKAAIELDDIDFSVLKK</sequence>
<comment type="function">
    <text>Confers resistance to phages by a mechanism of abortive infection. Seems to act by interfering with phage RNA synthesis. Does not act at the level of phage DNA synthesis.</text>
</comment>
<protein>
    <recommendedName>
        <fullName>Abortive phage resistance protein AbiGii</fullName>
    </recommendedName>
</protein>
<geneLocation type="plasmid">
    <name>pCI750</name>
</geneLocation>
<feature type="chain" id="PRO_0000064426" description="Abortive phage resistance protein AbiGii">
    <location>
        <begin position="1"/>
        <end position="397"/>
    </location>
</feature>
<proteinExistence type="predicted"/>
<dbReference type="EMBL" id="U60336">
    <property type="protein sequence ID" value="AAB38313.1"/>
    <property type="molecule type" value="Genomic_DNA"/>
</dbReference>
<dbReference type="RefSeq" id="WP_058147850.1">
    <property type="nucleotide sequence ID" value="NZ_RIEQ01000115.1"/>
</dbReference>
<dbReference type="InterPro" id="IPR053703">
    <property type="entry name" value="AbiGii-like"/>
</dbReference>
<dbReference type="InterPro" id="IPR031707">
    <property type="entry name" value="AbiGii_2"/>
</dbReference>
<dbReference type="NCBIfam" id="NF042958">
    <property type="entry name" value="phage_res_AbiGII"/>
    <property type="match status" value="1"/>
</dbReference>
<dbReference type="Pfam" id="PF16873">
    <property type="entry name" value="AbiGii_2"/>
    <property type="match status" value="1"/>
</dbReference>
<gene>
    <name type="primary">abiGII</name>
</gene>
<name>ABIG2_LACLC</name>